<sequence length="151" mass="18532">MTNYTAINYLLYLLSKRDYSEQDLRRKLVQKEYSQEEIEQAIERAQANNWQSDERYCAGFIRYRSQQGIGPRRLKQELKLKGIKDWLINQELENAEIDWFILAEQVFEKKRPQVWDIKAKQKMWRFMLSRGFYNDHFSHLMDIDYNDTEYE</sequence>
<feature type="chain" id="PRO_1000065157" description="Regulatory protein RecX">
    <location>
        <begin position="1"/>
        <end position="151"/>
    </location>
</feature>
<reference key="1">
    <citation type="journal article" date="2008" name="J. Bacteriol.">
        <title>The complete genome sequence of Actinobacillus pleuropneumoniae L20 (serotype 5b).</title>
        <authorList>
            <person name="Foote S.J."/>
            <person name="Bosse J.T."/>
            <person name="Bouevitch A.B."/>
            <person name="Langford P.R."/>
            <person name="Young N.M."/>
            <person name="Nash J.H.E."/>
        </authorList>
    </citation>
    <scope>NUCLEOTIDE SEQUENCE [LARGE SCALE GENOMIC DNA]</scope>
    <source>
        <strain>L20</strain>
    </source>
</reference>
<name>RECX_ACTP2</name>
<dbReference type="EMBL" id="CP000569">
    <property type="protein sequence ID" value="ABN74232.1"/>
    <property type="molecule type" value="Genomic_DNA"/>
</dbReference>
<dbReference type="RefSeq" id="WP_005601625.1">
    <property type="nucleotide sequence ID" value="NC_009053.1"/>
</dbReference>
<dbReference type="SMR" id="A3N1E6"/>
<dbReference type="STRING" id="416269.APL_1142"/>
<dbReference type="EnsemblBacteria" id="ABN74232">
    <property type="protein sequence ID" value="ABN74232"/>
    <property type="gene ID" value="APL_1142"/>
</dbReference>
<dbReference type="KEGG" id="apl:APL_1142"/>
<dbReference type="eggNOG" id="COG2137">
    <property type="taxonomic scope" value="Bacteria"/>
</dbReference>
<dbReference type="HOGENOM" id="CLU_066607_3_2_6"/>
<dbReference type="Proteomes" id="UP000001432">
    <property type="component" value="Chromosome"/>
</dbReference>
<dbReference type="GO" id="GO:0005737">
    <property type="term" value="C:cytoplasm"/>
    <property type="evidence" value="ECO:0007669"/>
    <property type="project" value="UniProtKB-SubCell"/>
</dbReference>
<dbReference type="GO" id="GO:0006282">
    <property type="term" value="P:regulation of DNA repair"/>
    <property type="evidence" value="ECO:0007669"/>
    <property type="project" value="UniProtKB-UniRule"/>
</dbReference>
<dbReference type="Gene3D" id="1.10.10.10">
    <property type="entry name" value="Winged helix-like DNA-binding domain superfamily/Winged helix DNA-binding domain"/>
    <property type="match status" value="3"/>
</dbReference>
<dbReference type="HAMAP" id="MF_01114">
    <property type="entry name" value="RecX"/>
    <property type="match status" value="1"/>
</dbReference>
<dbReference type="InterPro" id="IPR053926">
    <property type="entry name" value="RecX_HTH_1st"/>
</dbReference>
<dbReference type="InterPro" id="IPR053924">
    <property type="entry name" value="RecX_HTH_2nd"/>
</dbReference>
<dbReference type="InterPro" id="IPR003783">
    <property type="entry name" value="Regulatory_RecX"/>
</dbReference>
<dbReference type="InterPro" id="IPR036388">
    <property type="entry name" value="WH-like_DNA-bd_sf"/>
</dbReference>
<dbReference type="NCBIfam" id="NF001057">
    <property type="entry name" value="PRK00117.3-3"/>
    <property type="match status" value="1"/>
</dbReference>
<dbReference type="PANTHER" id="PTHR33602">
    <property type="entry name" value="REGULATORY PROTEIN RECX FAMILY PROTEIN"/>
    <property type="match status" value="1"/>
</dbReference>
<dbReference type="PANTHER" id="PTHR33602:SF1">
    <property type="entry name" value="REGULATORY PROTEIN RECX FAMILY PROTEIN"/>
    <property type="match status" value="1"/>
</dbReference>
<dbReference type="Pfam" id="PF21982">
    <property type="entry name" value="RecX_HTH1"/>
    <property type="match status" value="1"/>
</dbReference>
<dbReference type="Pfam" id="PF02631">
    <property type="entry name" value="RecX_HTH2"/>
    <property type="match status" value="1"/>
</dbReference>
<accession>A3N1E6</accession>
<comment type="function">
    <text evidence="1">Modulates RecA activity.</text>
</comment>
<comment type="subcellular location">
    <subcellularLocation>
        <location evidence="1">Cytoplasm</location>
    </subcellularLocation>
</comment>
<comment type="similarity">
    <text evidence="1">Belongs to the RecX family.</text>
</comment>
<organism>
    <name type="scientific">Actinobacillus pleuropneumoniae serotype 5b (strain L20)</name>
    <dbReference type="NCBI Taxonomy" id="416269"/>
    <lineage>
        <taxon>Bacteria</taxon>
        <taxon>Pseudomonadati</taxon>
        <taxon>Pseudomonadota</taxon>
        <taxon>Gammaproteobacteria</taxon>
        <taxon>Pasteurellales</taxon>
        <taxon>Pasteurellaceae</taxon>
        <taxon>Actinobacillus</taxon>
    </lineage>
</organism>
<keyword id="KW-0963">Cytoplasm</keyword>
<keyword id="KW-1185">Reference proteome</keyword>
<gene>
    <name evidence="1" type="primary">recX</name>
    <name type="ordered locus">APL_1142</name>
</gene>
<protein>
    <recommendedName>
        <fullName evidence="1">Regulatory protein RecX</fullName>
    </recommendedName>
</protein>
<proteinExistence type="inferred from homology"/>
<evidence type="ECO:0000255" key="1">
    <source>
        <dbReference type="HAMAP-Rule" id="MF_01114"/>
    </source>
</evidence>